<reference key="1">
    <citation type="submission" date="2006-10" db="EMBL/GenBank/DDBJ databases">
        <title>Complete sequence of Syntrophobacter fumaroxidans MPOB.</title>
        <authorList>
            <consortium name="US DOE Joint Genome Institute"/>
            <person name="Copeland A."/>
            <person name="Lucas S."/>
            <person name="Lapidus A."/>
            <person name="Barry K."/>
            <person name="Detter J.C."/>
            <person name="Glavina del Rio T."/>
            <person name="Hammon N."/>
            <person name="Israni S."/>
            <person name="Pitluck S."/>
            <person name="Goltsman E.G."/>
            <person name="Martinez M."/>
            <person name="Schmutz J."/>
            <person name="Larimer F."/>
            <person name="Land M."/>
            <person name="Hauser L."/>
            <person name="Kyrpides N."/>
            <person name="Kim E."/>
            <person name="Boone D.R."/>
            <person name="Brockman F."/>
            <person name="Culley D."/>
            <person name="Ferry J."/>
            <person name="Gunsalus R."/>
            <person name="McInerney M.J."/>
            <person name="Morrison M."/>
            <person name="Plugge C."/>
            <person name="Rohlin L."/>
            <person name="Scholten J."/>
            <person name="Sieber J."/>
            <person name="Stams A.J.M."/>
            <person name="Worm P."/>
            <person name="Henstra A.M."/>
            <person name="Richardson P."/>
        </authorList>
    </citation>
    <scope>NUCLEOTIDE SEQUENCE [LARGE SCALE GENOMIC DNA]</scope>
    <source>
        <strain>DSM 10017 / MPOB</strain>
    </source>
</reference>
<gene>
    <name evidence="1" type="primary">ruvA</name>
    <name type="ordered locus">Sfum_0994</name>
</gene>
<accession>A0LGY7</accession>
<organism>
    <name type="scientific">Syntrophobacter fumaroxidans (strain DSM 10017 / MPOB)</name>
    <dbReference type="NCBI Taxonomy" id="335543"/>
    <lineage>
        <taxon>Bacteria</taxon>
        <taxon>Pseudomonadati</taxon>
        <taxon>Thermodesulfobacteriota</taxon>
        <taxon>Syntrophobacteria</taxon>
        <taxon>Syntrophobacterales</taxon>
        <taxon>Syntrophobacteraceae</taxon>
        <taxon>Syntrophobacter</taxon>
    </lineage>
</organism>
<protein>
    <recommendedName>
        <fullName evidence="1">Holliday junction branch migration complex subunit RuvA</fullName>
    </recommendedName>
</protein>
<evidence type="ECO:0000255" key="1">
    <source>
        <dbReference type="HAMAP-Rule" id="MF_00031"/>
    </source>
</evidence>
<comment type="function">
    <text evidence="1">The RuvA-RuvB-RuvC complex processes Holliday junction (HJ) DNA during genetic recombination and DNA repair, while the RuvA-RuvB complex plays an important role in the rescue of blocked DNA replication forks via replication fork reversal (RFR). RuvA specifically binds to HJ cruciform DNA, conferring on it an open structure. The RuvB hexamer acts as an ATP-dependent pump, pulling dsDNA into and through the RuvAB complex. HJ branch migration allows RuvC to scan DNA until it finds its consensus sequence, where it cleaves and resolves the cruciform DNA.</text>
</comment>
<comment type="subunit">
    <text evidence="1">Homotetramer. Forms an RuvA(8)-RuvB(12)-Holliday junction (HJ) complex. HJ DNA is sandwiched between 2 RuvA tetramers; dsDNA enters through RuvA and exits via RuvB. An RuvB hexamer assembles on each DNA strand where it exits the tetramer. Each RuvB hexamer is contacted by two RuvA subunits (via domain III) on 2 adjacent RuvB subunits; this complex drives branch migration. In the full resolvosome a probable DNA-RuvA(4)-RuvB(12)-RuvC(2) complex forms which resolves the HJ.</text>
</comment>
<comment type="subcellular location">
    <subcellularLocation>
        <location evidence="1">Cytoplasm</location>
    </subcellularLocation>
</comment>
<comment type="domain">
    <text evidence="1">Has three domains with a flexible linker between the domains II and III and assumes an 'L' shape. Domain III is highly mobile and contacts RuvB.</text>
</comment>
<comment type="similarity">
    <text evidence="1">Belongs to the RuvA family.</text>
</comment>
<dbReference type="EMBL" id="CP000478">
    <property type="protein sequence ID" value="ABK16689.1"/>
    <property type="molecule type" value="Genomic_DNA"/>
</dbReference>
<dbReference type="RefSeq" id="WP_011697860.1">
    <property type="nucleotide sequence ID" value="NC_008554.1"/>
</dbReference>
<dbReference type="SMR" id="A0LGY7"/>
<dbReference type="FunCoup" id="A0LGY7">
    <property type="interactions" value="260"/>
</dbReference>
<dbReference type="STRING" id="335543.Sfum_0994"/>
<dbReference type="KEGG" id="sfu:Sfum_0994"/>
<dbReference type="eggNOG" id="COG0632">
    <property type="taxonomic scope" value="Bacteria"/>
</dbReference>
<dbReference type="HOGENOM" id="CLU_087936_0_0_7"/>
<dbReference type="InParanoid" id="A0LGY7"/>
<dbReference type="OrthoDB" id="5293449at2"/>
<dbReference type="Proteomes" id="UP000001784">
    <property type="component" value="Chromosome"/>
</dbReference>
<dbReference type="GO" id="GO:0005737">
    <property type="term" value="C:cytoplasm"/>
    <property type="evidence" value="ECO:0007669"/>
    <property type="project" value="UniProtKB-SubCell"/>
</dbReference>
<dbReference type="GO" id="GO:0009379">
    <property type="term" value="C:Holliday junction helicase complex"/>
    <property type="evidence" value="ECO:0007669"/>
    <property type="project" value="InterPro"/>
</dbReference>
<dbReference type="GO" id="GO:0048476">
    <property type="term" value="C:Holliday junction resolvase complex"/>
    <property type="evidence" value="ECO:0007669"/>
    <property type="project" value="UniProtKB-UniRule"/>
</dbReference>
<dbReference type="GO" id="GO:0005524">
    <property type="term" value="F:ATP binding"/>
    <property type="evidence" value="ECO:0007669"/>
    <property type="project" value="InterPro"/>
</dbReference>
<dbReference type="GO" id="GO:0000400">
    <property type="term" value="F:four-way junction DNA binding"/>
    <property type="evidence" value="ECO:0007669"/>
    <property type="project" value="UniProtKB-UniRule"/>
</dbReference>
<dbReference type="GO" id="GO:0009378">
    <property type="term" value="F:four-way junction helicase activity"/>
    <property type="evidence" value="ECO:0007669"/>
    <property type="project" value="InterPro"/>
</dbReference>
<dbReference type="GO" id="GO:0006310">
    <property type="term" value="P:DNA recombination"/>
    <property type="evidence" value="ECO:0007669"/>
    <property type="project" value="UniProtKB-UniRule"/>
</dbReference>
<dbReference type="GO" id="GO:0006281">
    <property type="term" value="P:DNA repair"/>
    <property type="evidence" value="ECO:0007669"/>
    <property type="project" value="UniProtKB-UniRule"/>
</dbReference>
<dbReference type="CDD" id="cd14332">
    <property type="entry name" value="UBA_RuvA_C"/>
    <property type="match status" value="1"/>
</dbReference>
<dbReference type="Gene3D" id="1.10.150.20">
    <property type="entry name" value="5' to 3' exonuclease, C-terminal subdomain"/>
    <property type="match status" value="1"/>
</dbReference>
<dbReference type="Gene3D" id="1.10.8.10">
    <property type="entry name" value="DNA helicase RuvA subunit, C-terminal domain"/>
    <property type="match status" value="1"/>
</dbReference>
<dbReference type="Gene3D" id="2.40.50.140">
    <property type="entry name" value="Nucleic acid-binding proteins"/>
    <property type="match status" value="1"/>
</dbReference>
<dbReference type="HAMAP" id="MF_00031">
    <property type="entry name" value="DNA_HJ_migration_RuvA"/>
    <property type="match status" value="1"/>
</dbReference>
<dbReference type="InterPro" id="IPR013849">
    <property type="entry name" value="DNA_helicase_Holl-junc_RuvA_I"/>
</dbReference>
<dbReference type="InterPro" id="IPR003583">
    <property type="entry name" value="Hlx-hairpin-Hlx_DNA-bd_motif"/>
</dbReference>
<dbReference type="InterPro" id="IPR012340">
    <property type="entry name" value="NA-bd_OB-fold"/>
</dbReference>
<dbReference type="InterPro" id="IPR000085">
    <property type="entry name" value="RuvA"/>
</dbReference>
<dbReference type="InterPro" id="IPR010994">
    <property type="entry name" value="RuvA_2-like"/>
</dbReference>
<dbReference type="InterPro" id="IPR011114">
    <property type="entry name" value="RuvA_C"/>
</dbReference>
<dbReference type="InterPro" id="IPR036267">
    <property type="entry name" value="RuvA_C_sf"/>
</dbReference>
<dbReference type="NCBIfam" id="TIGR00084">
    <property type="entry name" value="ruvA"/>
    <property type="match status" value="1"/>
</dbReference>
<dbReference type="Pfam" id="PF14520">
    <property type="entry name" value="HHH_5"/>
    <property type="match status" value="1"/>
</dbReference>
<dbReference type="Pfam" id="PF07499">
    <property type="entry name" value="RuvA_C"/>
    <property type="match status" value="1"/>
</dbReference>
<dbReference type="Pfam" id="PF01330">
    <property type="entry name" value="RuvA_N"/>
    <property type="match status" value="1"/>
</dbReference>
<dbReference type="SMART" id="SM00278">
    <property type="entry name" value="HhH1"/>
    <property type="match status" value="2"/>
</dbReference>
<dbReference type="SUPFAM" id="SSF46929">
    <property type="entry name" value="DNA helicase RuvA subunit, C-terminal domain"/>
    <property type="match status" value="1"/>
</dbReference>
<dbReference type="SUPFAM" id="SSF50249">
    <property type="entry name" value="Nucleic acid-binding proteins"/>
    <property type="match status" value="1"/>
</dbReference>
<dbReference type="SUPFAM" id="SSF47781">
    <property type="entry name" value="RuvA domain 2-like"/>
    <property type="match status" value="1"/>
</dbReference>
<name>RUVA_SYNFM</name>
<sequence>MIGHLEGRLRHKAPDYIVIDVHGVGYIVYVPLSTFYDLPGPGDTVALNIHTHIREDAIQLYGFRTVAEKDMFLRLITVNGVGPRLAVNILSGLTPDDLHRIILQQEGFRLKSIPGVGKKIAERILLELRDKMSVKKGREAEQPAPAAESSYGDAYSALVNLGYRPAEAEKALGKAIKSLGADPPVEKLLKETLRLLA</sequence>
<keyword id="KW-0963">Cytoplasm</keyword>
<keyword id="KW-0227">DNA damage</keyword>
<keyword id="KW-0233">DNA recombination</keyword>
<keyword id="KW-0234">DNA repair</keyword>
<keyword id="KW-0238">DNA-binding</keyword>
<keyword id="KW-1185">Reference proteome</keyword>
<proteinExistence type="inferred from homology"/>
<feature type="chain" id="PRO_1000002578" description="Holliday junction branch migration complex subunit RuvA">
    <location>
        <begin position="1"/>
        <end position="197"/>
    </location>
</feature>
<feature type="region of interest" description="Domain I" evidence="1">
    <location>
        <begin position="1"/>
        <end position="64"/>
    </location>
</feature>
<feature type="region of interest" description="Domain II" evidence="1">
    <location>
        <begin position="65"/>
        <end position="143"/>
    </location>
</feature>
<feature type="region of interest" description="Flexible linker" evidence="1">
    <location>
        <begin position="144"/>
        <end position="145"/>
    </location>
</feature>
<feature type="region of interest" description="Domain III" evidence="1">
    <location>
        <begin position="146"/>
        <end position="197"/>
    </location>
</feature>